<reference key="1">
    <citation type="submission" date="2008-02" db="EMBL/GenBank/DDBJ databases">
        <title>Complete sequence of Escherichia coli C str. ATCC 8739.</title>
        <authorList>
            <person name="Copeland A."/>
            <person name="Lucas S."/>
            <person name="Lapidus A."/>
            <person name="Glavina del Rio T."/>
            <person name="Dalin E."/>
            <person name="Tice H."/>
            <person name="Bruce D."/>
            <person name="Goodwin L."/>
            <person name="Pitluck S."/>
            <person name="Kiss H."/>
            <person name="Brettin T."/>
            <person name="Detter J.C."/>
            <person name="Han C."/>
            <person name="Kuske C.R."/>
            <person name="Schmutz J."/>
            <person name="Larimer F."/>
            <person name="Land M."/>
            <person name="Hauser L."/>
            <person name="Kyrpides N."/>
            <person name="Mikhailova N."/>
            <person name="Ingram L."/>
            <person name="Richardson P."/>
        </authorList>
    </citation>
    <scope>NUCLEOTIDE SEQUENCE [LARGE SCALE GENOMIC DNA]</scope>
    <source>
        <strain>ATCC 8739 / DSM 1576 / NBRC 3972 / NCIMB 8545 / WDCM 00012 / Crooks</strain>
    </source>
</reference>
<comment type="function">
    <text evidence="1">Synthesizes alpha-1,4-glucan chains using ADP-glucose.</text>
</comment>
<comment type="catalytic activity">
    <reaction evidence="1">
        <text>[(1-&gt;4)-alpha-D-glucosyl](n) + ADP-alpha-D-glucose = [(1-&gt;4)-alpha-D-glucosyl](n+1) + ADP + H(+)</text>
        <dbReference type="Rhea" id="RHEA:18189"/>
        <dbReference type="Rhea" id="RHEA-COMP:9584"/>
        <dbReference type="Rhea" id="RHEA-COMP:9587"/>
        <dbReference type="ChEBI" id="CHEBI:15378"/>
        <dbReference type="ChEBI" id="CHEBI:15444"/>
        <dbReference type="ChEBI" id="CHEBI:57498"/>
        <dbReference type="ChEBI" id="CHEBI:456216"/>
        <dbReference type="EC" id="2.4.1.21"/>
    </reaction>
</comment>
<comment type="pathway">
    <text evidence="1">Glycan biosynthesis; glycogen biosynthesis.</text>
</comment>
<comment type="similarity">
    <text evidence="1">Belongs to the glycosyltransferase 1 family. Bacterial/plant glycogen synthase subfamily.</text>
</comment>
<sequence>MQVLHVCSEMFPLLKTGGLADVIGALPAAQIADGVDARVLLPAFPDIRRGVTDAQVVSRRDTFAGHITLLFGHYNGVGIYLIDAPHLYDRPGSPYHDTNLFAYTDNVLRFALLGWVGAEMASGLDPFWRPDVVHAHDWHAGLAPAYLAARGRPAKSVFTVHNLAYQGMFYAHHMNDIQLPWSFFNIHGLEFNGQISFLKAGLYYADHITAVSPTYAREITEPQFAYGMEGLLQQRHREGRLSGVLNGVDEKIWSPETDLLLASRYTRDTLEDKAENKRQLQIAMGLKVDDKVPLFAVVSRLTSQKGLDLVLEALPGLLEQGGQLALLGAGDPVLQEGFLAAAAEYPGQVGVQIGYHEAFSHRIMGGADVILVPSRFEPCGLTQLYGLKYGTLPLVRRTGGLADTVSDCSLENLADGVASGFVFEDSNAWSLLRAIRRAFVLWSRPSLWRFVQRQAMAMDFSWQVAAKSYRELYYRLK</sequence>
<protein>
    <recommendedName>
        <fullName evidence="1">Glycogen synthase</fullName>
        <ecNumber evidence="1">2.4.1.21</ecNumber>
    </recommendedName>
    <alternativeName>
        <fullName evidence="1">Starch [bacterial glycogen] synthase</fullName>
    </alternativeName>
</protein>
<dbReference type="EC" id="2.4.1.21" evidence="1"/>
<dbReference type="EMBL" id="CP000946">
    <property type="protein sequence ID" value="ACA75961.1"/>
    <property type="molecule type" value="Genomic_DNA"/>
</dbReference>
<dbReference type="RefSeq" id="WP_001197646.1">
    <property type="nucleotide sequence ID" value="NZ_MTFT01000001.1"/>
</dbReference>
<dbReference type="SMR" id="B1IP35"/>
<dbReference type="CAZy" id="GT5">
    <property type="family name" value="Glycosyltransferase Family 5"/>
</dbReference>
<dbReference type="GeneID" id="75202274"/>
<dbReference type="KEGG" id="ecl:EcolC_0283"/>
<dbReference type="HOGENOM" id="CLU_009583_18_2_6"/>
<dbReference type="UniPathway" id="UPA00164"/>
<dbReference type="GO" id="GO:0005829">
    <property type="term" value="C:cytosol"/>
    <property type="evidence" value="ECO:0007669"/>
    <property type="project" value="TreeGrafter"/>
</dbReference>
<dbReference type="GO" id="GO:0009011">
    <property type="term" value="F:alpha-1,4-glucan glucosyltransferase (ADP-glucose donor) activity"/>
    <property type="evidence" value="ECO:0007669"/>
    <property type="project" value="UniProtKB-UniRule"/>
</dbReference>
<dbReference type="GO" id="GO:0004373">
    <property type="term" value="F:alpha-1,4-glucan glucosyltransferase (UDP-glucose donor) activity"/>
    <property type="evidence" value="ECO:0007669"/>
    <property type="project" value="InterPro"/>
</dbReference>
<dbReference type="GO" id="GO:0005978">
    <property type="term" value="P:glycogen biosynthetic process"/>
    <property type="evidence" value="ECO:0007669"/>
    <property type="project" value="UniProtKB-UniRule"/>
</dbReference>
<dbReference type="CDD" id="cd03791">
    <property type="entry name" value="GT5_Glycogen_synthase_DULL1-like"/>
    <property type="match status" value="1"/>
</dbReference>
<dbReference type="FunFam" id="3.40.50.2000:FF:000008">
    <property type="entry name" value="Glycogen synthase"/>
    <property type="match status" value="1"/>
</dbReference>
<dbReference type="FunFam" id="3.40.50.2000:FF:000011">
    <property type="entry name" value="Glycogen synthase"/>
    <property type="match status" value="1"/>
</dbReference>
<dbReference type="Gene3D" id="3.40.50.2000">
    <property type="entry name" value="Glycogen Phosphorylase B"/>
    <property type="match status" value="2"/>
</dbReference>
<dbReference type="HAMAP" id="MF_00484">
    <property type="entry name" value="Glycogen_synth"/>
    <property type="match status" value="1"/>
</dbReference>
<dbReference type="InterPro" id="IPR001296">
    <property type="entry name" value="Glyco_trans_1"/>
</dbReference>
<dbReference type="InterPro" id="IPR011835">
    <property type="entry name" value="GS/SS"/>
</dbReference>
<dbReference type="InterPro" id="IPR013534">
    <property type="entry name" value="Starch_synth_cat_dom"/>
</dbReference>
<dbReference type="NCBIfam" id="TIGR02095">
    <property type="entry name" value="glgA"/>
    <property type="match status" value="1"/>
</dbReference>
<dbReference type="NCBIfam" id="NF001899">
    <property type="entry name" value="PRK00654.1-2"/>
    <property type="match status" value="1"/>
</dbReference>
<dbReference type="PANTHER" id="PTHR45825:SF11">
    <property type="entry name" value="ALPHA AMYLASE DOMAIN-CONTAINING PROTEIN"/>
    <property type="match status" value="1"/>
</dbReference>
<dbReference type="PANTHER" id="PTHR45825">
    <property type="entry name" value="GRANULE-BOUND STARCH SYNTHASE 1, CHLOROPLASTIC/AMYLOPLASTIC"/>
    <property type="match status" value="1"/>
</dbReference>
<dbReference type="Pfam" id="PF08323">
    <property type="entry name" value="Glyco_transf_5"/>
    <property type="match status" value="1"/>
</dbReference>
<dbReference type="Pfam" id="PF00534">
    <property type="entry name" value="Glycos_transf_1"/>
    <property type="match status" value="1"/>
</dbReference>
<dbReference type="SUPFAM" id="SSF53756">
    <property type="entry name" value="UDP-Glycosyltransferase/glycogen phosphorylase"/>
    <property type="match status" value="1"/>
</dbReference>
<feature type="chain" id="PRO_1000081323" description="Glycogen synthase">
    <location>
        <begin position="1"/>
        <end position="477"/>
    </location>
</feature>
<feature type="binding site" evidence="1">
    <location>
        <position position="15"/>
    </location>
    <ligand>
        <name>ADP-alpha-D-glucose</name>
        <dbReference type="ChEBI" id="CHEBI:57498"/>
    </ligand>
</feature>
<accession>B1IP35</accession>
<gene>
    <name evidence="1" type="primary">glgA</name>
    <name type="ordered locus">EcolC_0283</name>
</gene>
<proteinExistence type="inferred from homology"/>
<keyword id="KW-0320">Glycogen biosynthesis</keyword>
<keyword id="KW-0328">Glycosyltransferase</keyword>
<keyword id="KW-0808">Transferase</keyword>
<organism>
    <name type="scientific">Escherichia coli (strain ATCC 8739 / DSM 1576 / NBRC 3972 / NCIMB 8545 / WDCM 00012 / Crooks)</name>
    <dbReference type="NCBI Taxonomy" id="481805"/>
    <lineage>
        <taxon>Bacteria</taxon>
        <taxon>Pseudomonadati</taxon>
        <taxon>Pseudomonadota</taxon>
        <taxon>Gammaproteobacteria</taxon>
        <taxon>Enterobacterales</taxon>
        <taxon>Enterobacteriaceae</taxon>
        <taxon>Escherichia</taxon>
    </lineage>
</organism>
<evidence type="ECO:0000255" key="1">
    <source>
        <dbReference type="HAMAP-Rule" id="MF_00484"/>
    </source>
</evidence>
<name>GLGA_ECOLC</name>